<evidence type="ECO:0000255" key="1">
    <source>
        <dbReference type="HAMAP-Rule" id="MF_01039"/>
    </source>
</evidence>
<gene>
    <name evidence="1" type="primary">gpmA</name>
    <name type="ordered locus">SSA_0688</name>
</gene>
<accession>A3CLS0</accession>
<name>GPMA_STRSV</name>
<feature type="chain" id="PRO_1000064111" description="2,3-bisphosphoglycerate-dependent phosphoglycerate mutase">
    <location>
        <begin position="1"/>
        <end position="230"/>
    </location>
</feature>
<feature type="active site" description="Tele-phosphohistidine intermediate" evidence="1">
    <location>
        <position position="9"/>
    </location>
</feature>
<feature type="active site" description="Proton donor/acceptor" evidence="1">
    <location>
        <position position="87"/>
    </location>
</feature>
<feature type="binding site" evidence="1">
    <location>
        <begin position="8"/>
        <end position="15"/>
    </location>
    <ligand>
        <name>substrate</name>
    </ligand>
</feature>
<feature type="binding site" evidence="1">
    <location>
        <begin position="21"/>
        <end position="22"/>
    </location>
    <ligand>
        <name>substrate</name>
    </ligand>
</feature>
<feature type="binding site" evidence="1">
    <location>
        <position position="60"/>
    </location>
    <ligand>
        <name>substrate</name>
    </ligand>
</feature>
<feature type="binding site" evidence="1">
    <location>
        <begin position="87"/>
        <end position="90"/>
    </location>
    <ligand>
        <name>substrate</name>
    </ligand>
</feature>
<feature type="binding site" evidence="1">
    <location>
        <position position="98"/>
    </location>
    <ligand>
        <name>substrate</name>
    </ligand>
</feature>
<feature type="binding site" evidence="1">
    <location>
        <begin position="114"/>
        <end position="115"/>
    </location>
    <ligand>
        <name>substrate</name>
    </ligand>
</feature>
<feature type="binding site" evidence="1">
    <location>
        <begin position="183"/>
        <end position="184"/>
    </location>
    <ligand>
        <name>substrate</name>
    </ligand>
</feature>
<feature type="site" description="Transition state stabilizer" evidence="1">
    <location>
        <position position="182"/>
    </location>
</feature>
<dbReference type="EC" id="5.4.2.11" evidence="1"/>
<dbReference type="EMBL" id="CP000387">
    <property type="protein sequence ID" value="ABN44125.1"/>
    <property type="molecule type" value="Genomic_DNA"/>
</dbReference>
<dbReference type="RefSeq" id="WP_002900876.1">
    <property type="nucleotide sequence ID" value="NC_009009.1"/>
</dbReference>
<dbReference type="RefSeq" id="YP_001034675.1">
    <property type="nucleotide sequence ID" value="NC_009009.1"/>
</dbReference>
<dbReference type="SMR" id="A3CLS0"/>
<dbReference type="STRING" id="388919.SSA_0688"/>
<dbReference type="GeneID" id="48425110"/>
<dbReference type="KEGG" id="ssa:SSA_0688"/>
<dbReference type="PATRIC" id="fig|388919.9.peg.662"/>
<dbReference type="eggNOG" id="COG0588">
    <property type="taxonomic scope" value="Bacteria"/>
</dbReference>
<dbReference type="HOGENOM" id="CLU_033323_1_5_9"/>
<dbReference type="OrthoDB" id="9781415at2"/>
<dbReference type="UniPathway" id="UPA00109">
    <property type="reaction ID" value="UER00186"/>
</dbReference>
<dbReference type="Proteomes" id="UP000002148">
    <property type="component" value="Chromosome"/>
</dbReference>
<dbReference type="GO" id="GO:0004619">
    <property type="term" value="F:phosphoglycerate mutase activity"/>
    <property type="evidence" value="ECO:0007669"/>
    <property type="project" value="UniProtKB-EC"/>
</dbReference>
<dbReference type="GO" id="GO:0006094">
    <property type="term" value="P:gluconeogenesis"/>
    <property type="evidence" value="ECO:0007669"/>
    <property type="project" value="UniProtKB-UniRule"/>
</dbReference>
<dbReference type="GO" id="GO:0006096">
    <property type="term" value="P:glycolytic process"/>
    <property type="evidence" value="ECO:0007669"/>
    <property type="project" value="UniProtKB-UniRule"/>
</dbReference>
<dbReference type="CDD" id="cd07067">
    <property type="entry name" value="HP_PGM_like"/>
    <property type="match status" value="1"/>
</dbReference>
<dbReference type="FunFam" id="3.40.50.1240:FF:000003">
    <property type="entry name" value="2,3-bisphosphoglycerate-dependent phosphoglycerate mutase"/>
    <property type="match status" value="1"/>
</dbReference>
<dbReference type="Gene3D" id="3.40.50.1240">
    <property type="entry name" value="Phosphoglycerate mutase-like"/>
    <property type="match status" value="1"/>
</dbReference>
<dbReference type="HAMAP" id="MF_01039">
    <property type="entry name" value="PGAM_GpmA"/>
    <property type="match status" value="1"/>
</dbReference>
<dbReference type="InterPro" id="IPR013078">
    <property type="entry name" value="His_Pase_superF_clade-1"/>
</dbReference>
<dbReference type="InterPro" id="IPR029033">
    <property type="entry name" value="His_PPase_superfam"/>
</dbReference>
<dbReference type="InterPro" id="IPR005952">
    <property type="entry name" value="Phosphogly_mut1"/>
</dbReference>
<dbReference type="NCBIfam" id="TIGR01258">
    <property type="entry name" value="pgm_1"/>
    <property type="match status" value="1"/>
</dbReference>
<dbReference type="NCBIfam" id="NF010713">
    <property type="entry name" value="PRK14115.1"/>
    <property type="match status" value="1"/>
</dbReference>
<dbReference type="NCBIfam" id="NF010715">
    <property type="entry name" value="PRK14117.1"/>
    <property type="match status" value="1"/>
</dbReference>
<dbReference type="PANTHER" id="PTHR11931">
    <property type="entry name" value="PHOSPHOGLYCERATE MUTASE"/>
    <property type="match status" value="1"/>
</dbReference>
<dbReference type="Pfam" id="PF00300">
    <property type="entry name" value="His_Phos_1"/>
    <property type="match status" value="1"/>
</dbReference>
<dbReference type="PIRSF" id="PIRSF000709">
    <property type="entry name" value="6PFK_2-Ptase"/>
    <property type="match status" value="1"/>
</dbReference>
<dbReference type="SMART" id="SM00855">
    <property type="entry name" value="PGAM"/>
    <property type="match status" value="1"/>
</dbReference>
<dbReference type="SUPFAM" id="SSF53254">
    <property type="entry name" value="Phosphoglycerate mutase-like"/>
    <property type="match status" value="1"/>
</dbReference>
<sequence length="230" mass="26163">MVKLVFARHGESEWNKANLFTGWADVDLSEKGTQQAIDAGKLIKEAGIEFDQAYTSVLKRAIKTTNLALEASDQLWVPVEKSWRLNERHYGGLTGKNKAEAAEQFGDEQVHIWRRSYDVLPPNMDRDDEHSAHTDRRYASLDDSVIPDAENLKVTLERALPFWEDKIAPALKDGKNVFVGAHGNSIRALVKHIKQLSDDEIMDVEIPNFPPLVFEFDEKLNVVKEYYLGK</sequence>
<protein>
    <recommendedName>
        <fullName evidence="1">2,3-bisphosphoglycerate-dependent phosphoglycerate mutase</fullName>
        <shortName evidence="1">BPG-dependent PGAM</shortName>
        <shortName evidence="1">PGAM</shortName>
        <shortName evidence="1">Phosphoglyceromutase</shortName>
        <shortName evidence="1">dPGM</shortName>
        <ecNumber evidence="1">5.4.2.11</ecNumber>
    </recommendedName>
</protein>
<keyword id="KW-0312">Gluconeogenesis</keyword>
<keyword id="KW-0324">Glycolysis</keyword>
<keyword id="KW-0413">Isomerase</keyword>
<keyword id="KW-1185">Reference proteome</keyword>
<organism>
    <name type="scientific">Streptococcus sanguinis (strain SK36)</name>
    <dbReference type="NCBI Taxonomy" id="388919"/>
    <lineage>
        <taxon>Bacteria</taxon>
        <taxon>Bacillati</taxon>
        <taxon>Bacillota</taxon>
        <taxon>Bacilli</taxon>
        <taxon>Lactobacillales</taxon>
        <taxon>Streptococcaceae</taxon>
        <taxon>Streptococcus</taxon>
    </lineage>
</organism>
<comment type="function">
    <text evidence="1">Catalyzes the interconversion of 2-phosphoglycerate and 3-phosphoglycerate.</text>
</comment>
<comment type="catalytic activity">
    <reaction evidence="1">
        <text>(2R)-2-phosphoglycerate = (2R)-3-phosphoglycerate</text>
        <dbReference type="Rhea" id="RHEA:15901"/>
        <dbReference type="ChEBI" id="CHEBI:58272"/>
        <dbReference type="ChEBI" id="CHEBI:58289"/>
        <dbReference type="EC" id="5.4.2.11"/>
    </reaction>
</comment>
<comment type="pathway">
    <text evidence="1">Carbohydrate degradation; glycolysis; pyruvate from D-glyceraldehyde 3-phosphate: step 3/5.</text>
</comment>
<comment type="similarity">
    <text evidence="1">Belongs to the phosphoglycerate mutase family. BPG-dependent PGAM subfamily.</text>
</comment>
<proteinExistence type="inferred from homology"/>
<reference key="1">
    <citation type="journal article" date="2007" name="J. Bacteriol.">
        <title>Genome of the opportunistic pathogen Streptococcus sanguinis.</title>
        <authorList>
            <person name="Xu P."/>
            <person name="Alves J.M."/>
            <person name="Kitten T."/>
            <person name="Brown A."/>
            <person name="Chen Z."/>
            <person name="Ozaki L.S."/>
            <person name="Manque P."/>
            <person name="Ge X."/>
            <person name="Serrano M.G."/>
            <person name="Puiu D."/>
            <person name="Hendricks S."/>
            <person name="Wang Y."/>
            <person name="Chaplin M.D."/>
            <person name="Akan D."/>
            <person name="Paik S."/>
            <person name="Peterson D.L."/>
            <person name="Macrina F.L."/>
            <person name="Buck G.A."/>
        </authorList>
    </citation>
    <scope>NUCLEOTIDE SEQUENCE [LARGE SCALE GENOMIC DNA]</scope>
    <source>
        <strain>SK36</strain>
    </source>
</reference>